<comment type="function">
    <text evidence="1">Mitochondrial membrane ATP synthase (F(1)F(0) ATP synthase or Complex V) produces ATP from ADP in the presence of a proton gradient across the membrane which is generated by electron transport complexes of the respiratory chain. F-type ATPases consist of two structural domains, F(1) - containing the extramembraneous catalytic core and F(0) - containing the membrane proton channel, linked together by a central stalk and a peripheral stalk. During catalysis, ATP synthesis in the catalytic domain of F(1) is coupled via a rotary mechanism of the central stalk subunits to proton translocation. Part of the complex F(0) domain. Minor subunit located with subunit a in the membrane (By similarity).</text>
</comment>
<comment type="subunit">
    <text evidence="1">F-type ATPases have 2 components, CF(1) - the catalytic core - and CF(0) - the membrane proton channel.</text>
</comment>
<comment type="subcellular location">
    <subcellularLocation>
        <location>Mitochondrion membrane</location>
        <topology>Single-pass membrane protein</topology>
    </subcellularLocation>
</comment>
<comment type="similarity">
    <text evidence="3">Belongs to the ATPase protein 8 family.</text>
</comment>
<reference key="1">
    <citation type="journal article" date="1989" name="J. Biol. Chem.">
        <title>The complete nucleotide sequence, gene organization, and genetic code of the mitochondrial genome of Paracentrotus lividus.</title>
        <authorList>
            <person name="Cantatore P."/>
            <person name="Roberti M."/>
            <person name="Rainaldi G."/>
            <person name="Gadaleta M.N."/>
            <person name="Saccone C."/>
        </authorList>
    </citation>
    <scope>NUCLEOTIDE SEQUENCE [GENOMIC DNA]</scope>
</reference>
<keyword id="KW-0066">ATP synthesis</keyword>
<keyword id="KW-0138">CF(0)</keyword>
<keyword id="KW-0375">Hydrogen ion transport</keyword>
<keyword id="KW-0406">Ion transport</keyword>
<keyword id="KW-0472">Membrane</keyword>
<keyword id="KW-0496">Mitochondrion</keyword>
<keyword id="KW-0812">Transmembrane</keyword>
<keyword id="KW-1133">Transmembrane helix</keyword>
<keyword id="KW-0813">Transport</keyword>
<geneLocation type="mitochondrion"/>
<organism>
    <name type="scientific">Paracentrotus lividus</name>
    <name type="common">Common sea urchin</name>
    <dbReference type="NCBI Taxonomy" id="7656"/>
    <lineage>
        <taxon>Eukaryota</taxon>
        <taxon>Metazoa</taxon>
        <taxon>Echinodermata</taxon>
        <taxon>Eleutherozoa</taxon>
        <taxon>Echinozoa</taxon>
        <taxon>Echinoidea</taxon>
        <taxon>Euechinoidea</taxon>
        <taxon>Echinacea</taxon>
        <taxon>Camarodonta</taxon>
        <taxon>Echinidea</taxon>
        <taxon>Echinidae</taxon>
        <taxon>Paracentrotus</taxon>
    </lineage>
</organism>
<name>ATP8_PARLI</name>
<accession>P12697</accession>
<evidence type="ECO:0000250" key="1"/>
<evidence type="ECO:0000255" key="2"/>
<evidence type="ECO:0000305" key="3"/>
<gene>
    <name type="primary">MT-ATP8</name>
    <name type="synonym">ATP8</name>
    <name type="synonym">ATPASE8</name>
    <name type="synonym">MTATP8</name>
</gene>
<protein>
    <recommendedName>
        <fullName>ATP synthase protein 8</fullName>
    </recommendedName>
    <alternativeName>
        <fullName>A6L</fullName>
    </alternativeName>
    <alternativeName>
        <fullName>F-ATPase subunit 8</fullName>
    </alternativeName>
</protein>
<feature type="chain" id="PRO_0000195563" description="ATP synthase protein 8">
    <location>
        <begin position="1"/>
        <end position="54"/>
    </location>
</feature>
<feature type="transmembrane region" description="Helical" evidence="2">
    <location>
        <begin position="8"/>
        <end position="28"/>
    </location>
</feature>
<dbReference type="EMBL" id="J04815">
    <property type="protein sequence ID" value="AAA68138.1"/>
    <property type="molecule type" value="Genomic_DNA"/>
</dbReference>
<dbReference type="PIR" id="F34284">
    <property type="entry name" value="F34284"/>
</dbReference>
<dbReference type="RefSeq" id="NP_008126.1">
    <property type="nucleotide sequence ID" value="NC_001572.1"/>
</dbReference>
<dbReference type="SMR" id="P12697"/>
<dbReference type="GeneID" id="807706"/>
<dbReference type="CTD" id="4509"/>
<dbReference type="GO" id="GO:0031966">
    <property type="term" value="C:mitochondrial membrane"/>
    <property type="evidence" value="ECO:0007669"/>
    <property type="project" value="UniProtKB-SubCell"/>
</dbReference>
<dbReference type="GO" id="GO:0045259">
    <property type="term" value="C:proton-transporting ATP synthase complex"/>
    <property type="evidence" value="ECO:0007669"/>
    <property type="project" value="UniProtKB-KW"/>
</dbReference>
<dbReference type="GO" id="GO:0015078">
    <property type="term" value="F:proton transmembrane transporter activity"/>
    <property type="evidence" value="ECO:0007669"/>
    <property type="project" value="InterPro"/>
</dbReference>
<dbReference type="GO" id="GO:0015986">
    <property type="term" value="P:proton motive force-driven ATP synthesis"/>
    <property type="evidence" value="ECO:0007669"/>
    <property type="project" value="InterPro"/>
</dbReference>
<dbReference type="InterPro" id="IPR001421">
    <property type="entry name" value="ATP8_metazoa"/>
</dbReference>
<dbReference type="Pfam" id="PF00895">
    <property type="entry name" value="ATP-synt_8"/>
    <property type="match status" value="1"/>
</dbReference>
<sequence length="54" mass="6453">MPQLDFTWWIINFFIIWTAILLTLVILVNNKTAQNLTTTDSLQIEKNSTNWQWL</sequence>
<proteinExistence type="inferred from homology"/>